<accession>Q8JZR4</accession>
<accession>A2A8F0</accession>
<gene>
    <name evidence="6" type="primary">Slc1a7</name>
</gene>
<organism>
    <name type="scientific">Mus musculus</name>
    <name type="common">Mouse</name>
    <dbReference type="NCBI Taxonomy" id="10090"/>
    <lineage>
        <taxon>Eukaryota</taxon>
        <taxon>Metazoa</taxon>
        <taxon>Chordata</taxon>
        <taxon>Craniata</taxon>
        <taxon>Vertebrata</taxon>
        <taxon>Euteleostomi</taxon>
        <taxon>Mammalia</taxon>
        <taxon>Eutheria</taxon>
        <taxon>Euarchontoglires</taxon>
        <taxon>Glires</taxon>
        <taxon>Rodentia</taxon>
        <taxon>Myomorpha</taxon>
        <taxon>Muroidea</taxon>
        <taxon>Muridae</taxon>
        <taxon>Murinae</taxon>
        <taxon>Mus</taxon>
        <taxon>Mus</taxon>
    </lineage>
</organism>
<evidence type="ECO:0000250" key="1">
    <source>
        <dbReference type="UniProtKB" id="O00341"/>
    </source>
</evidence>
<evidence type="ECO:0000255" key="2"/>
<evidence type="ECO:0000269" key="3">
    <source>
    </source>
</evidence>
<evidence type="ECO:0000269" key="4">
    <source>
    </source>
</evidence>
<evidence type="ECO:0000305" key="5"/>
<evidence type="ECO:0000312" key="6">
    <source>
        <dbReference type="MGI" id="MGI:2444087"/>
    </source>
</evidence>
<comment type="function">
    <text evidence="1 3 4">Sodium-dependent, high-affinity amino acid transporter that mediates the uptake of L-glutamate and also L-aspartate and D-aspartate. Functions as a symporter that transports one amino acid molecule together with two or three Na(+) ions and one proton, in parallel with the counter-transport of one K(+) ion (By similarity). Acts primarily as an inhibitory glutamate-gated chloride channel being a major inhibitory presynaptic receptor at mammalian rod bipolar cell axon terminals. Glutamate binding gates a large Cl(-) conductance that mediates inhibition, affecting visual processing in the retina (PubMed:16973698, PubMed:32233906).</text>
</comment>
<comment type="catalytic activity">
    <reaction evidence="3 4">
        <text>K(+)(in) + L-glutamate(out) + 3 Na(+)(out) + H(+)(out) = K(+)(out) + L-glutamate(in) + 3 Na(+)(in) + H(+)(in)</text>
        <dbReference type="Rhea" id="RHEA:70699"/>
        <dbReference type="ChEBI" id="CHEBI:15378"/>
        <dbReference type="ChEBI" id="CHEBI:29101"/>
        <dbReference type="ChEBI" id="CHEBI:29103"/>
        <dbReference type="ChEBI" id="CHEBI:29985"/>
    </reaction>
</comment>
<comment type="catalytic activity">
    <reaction evidence="1">
        <text>K(+)(in) + L-aspartate(out) + 3 Na(+)(out) + H(+)(out) = K(+)(out) + L-aspartate(in) + 3 Na(+)(in) + H(+)(in)</text>
        <dbReference type="Rhea" id="RHEA:70851"/>
        <dbReference type="ChEBI" id="CHEBI:15378"/>
        <dbReference type="ChEBI" id="CHEBI:29101"/>
        <dbReference type="ChEBI" id="CHEBI:29103"/>
        <dbReference type="ChEBI" id="CHEBI:29991"/>
    </reaction>
</comment>
<comment type="catalytic activity">
    <reaction evidence="1">
        <text>D-aspartate(out) + K(+)(in) + 3 Na(+)(out) + H(+)(out) = D-aspartate(in) + K(+)(out) + 3 Na(+)(in) + H(+)(in)</text>
        <dbReference type="Rhea" id="RHEA:71379"/>
        <dbReference type="ChEBI" id="CHEBI:15378"/>
        <dbReference type="ChEBI" id="CHEBI:29101"/>
        <dbReference type="ChEBI" id="CHEBI:29103"/>
        <dbReference type="ChEBI" id="CHEBI:29990"/>
    </reaction>
</comment>
<comment type="subunit">
    <text evidence="1">Interacts with the PDZ domains of DLG4.</text>
</comment>
<comment type="subcellular location">
    <subcellularLocation>
        <location evidence="3">Photoreceptor inner segment membrane</location>
        <topology evidence="2">Multi-pass membrane protein</topology>
    </subcellularLocation>
    <subcellularLocation>
        <location evidence="3">Synaptic cell membrane</location>
        <topology evidence="2">Multi-pass membrane protein</topology>
    </subcellularLocation>
    <text evidence="3">Located in both cone and rod photoreceptor terminals and in axon terminals of rod bipolar cells.</text>
</comment>
<comment type="tissue specificity">
    <text evidence="4">Expressed in retina, located in both cone and rod photoreceptor terminals and in axon terminals of rod bipolar cells.</text>
</comment>
<comment type="similarity">
    <text evidence="5">Belongs to the dicarboxylate/amino acid:cation symporter (DAACS) (TC 2.A.23) family. SLC1A7 subfamily.</text>
</comment>
<dbReference type="EMBL" id="AK044586">
    <property type="protein sequence ID" value="BAC31989.1"/>
    <property type="molecule type" value="mRNA"/>
</dbReference>
<dbReference type="EMBL" id="AK044671">
    <property type="protein sequence ID" value="BAC32027.1"/>
    <property type="molecule type" value="mRNA"/>
</dbReference>
<dbReference type="EMBL" id="AL611936">
    <property type="status" value="NOT_ANNOTATED_CDS"/>
    <property type="molecule type" value="Genomic_DNA"/>
</dbReference>
<dbReference type="EMBL" id="BC030400">
    <property type="protein sequence ID" value="AAH30400.1"/>
    <property type="molecule type" value="mRNA"/>
</dbReference>
<dbReference type="CCDS" id="CCDS18444.3"/>
<dbReference type="RefSeq" id="NP_666367.3">
    <property type="nucleotide sequence ID" value="NM_146255.3"/>
</dbReference>
<dbReference type="SMR" id="Q8JZR4"/>
<dbReference type="FunCoup" id="Q8JZR4">
    <property type="interactions" value="80"/>
</dbReference>
<dbReference type="STRING" id="10090.ENSMUSP00000158982"/>
<dbReference type="GlyCosmos" id="Q8JZR4">
    <property type="glycosylation" value="2 sites, No reported glycans"/>
</dbReference>
<dbReference type="GlyGen" id="Q8JZR4">
    <property type="glycosylation" value="2 sites, 2 N-linked glycans (2 sites)"/>
</dbReference>
<dbReference type="iPTMnet" id="Q8JZR4"/>
<dbReference type="PhosphoSitePlus" id="Q8JZR4"/>
<dbReference type="PaxDb" id="10090-ENSMUSP00000102324"/>
<dbReference type="ProteomicsDB" id="277750"/>
<dbReference type="Antibodypedia" id="46889">
    <property type="antibodies" value="128 antibodies from 22 providers"/>
</dbReference>
<dbReference type="DNASU" id="242607"/>
<dbReference type="Ensembl" id="ENSMUST00000106713.5">
    <property type="protein sequence ID" value="ENSMUSP00000102324.5"/>
    <property type="gene ID" value="ENSMUSG00000008932.11"/>
</dbReference>
<dbReference type="GeneID" id="242607"/>
<dbReference type="KEGG" id="mmu:242607"/>
<dbReference type="AGR" id="MGI:2444087"/>
<dbReference type="CTD" id="6512"/>
<dbReference type="MGI" id="MGI:2444087">
    <property type="gene designation" value="Slc1a7"/>
</dbReference>
<dbReference type="VEuPathDB" id="HostDB:ENSMUSG00000008932"/>
<dbReference type="eggNOG" id="KOG3787">
    <property type="taxonomic scope" value="Eukaryota"/>
</dbReference>
<dbReference type="GeneTree" id="ENSGT00940000156073"/>
<dbReference type="InParanoid" id="Q8JZR4"/>
<dbReference type="OrthoDB" id="5877963at2759"/>
<dbReference type="PhylomeDB" id="Q8JZR4"/>
<dbReference type="TreeFam" id="TF315206"/>
<dbReference type="Reactome" id="R-MMU-210500">
    <property type="pathway name" value="Glutamate Neurotransmitter Release Cycle"/>
</dbReference>
<dbReference type="Reactome" id="R-MMU-425393">
    <property type="pathway name" value="Transport of inorganic cations/anions and amino acids/oligopeptides"/>
</dbReference>
<dbReference type="BioGRID-ORCS" id="242607">
    <property type="hits" value="2 hits in 80 CRISPR screens"/>
</dbReference>
<dbReference type="ChiTaRS" id="Slc1a7">
    <property type="organism name" value="mouse"/>
</dbReference>
<dbReference type="PRO" id="PR:Q8JZR4"/>
<dbReference type="Proteomes" id="UP000000589">
    <property type="component" value="Chromosome 4"/>
</dbReference>
<dbReference type="RNAct" id="Q8JZR4">
    <property type="molecule type" value="protein"/>
</dbReference>
<dbReference type="Bgee" id="ENSMUSG00000008932">
    <property type="expression patterns" value="Expressed in retinal neural layer and 17 other cell types or tissues"/>
</dbReference>
<dbReference type="ExpressionAtlas" id="Q8JZR4">
    <property type="expression patterns" value="baseline and differential"/>
</dbReference>
<dbReference type="GO" id="GO:0043679">
    <property type="term" value="C:axon terminus"/>
    <property type="evidence" value="ECO:0000314"/>
    <property type="project" value="UniProtKB"/>
</dbReference>
<dbReference type="GO" id="GO:0098978">
    <property type="term" value="C:glutamatergic synapse"/>
    <property type="evidence" value="ECO:0000314"/>
    <property type="project" value="SynGO"/>
</dbReference>
<dbReference type="GO" id="GO:1990796">
    <property type="term" value="C:photoreceptor cell terminal bouton"/>
    <property type="evidence" value="ECO:0000314"/>
    <property type="project" value="UniProtKB"/>
</dbReference>
<dbReference type="GO" id="GO:0005886">
    <property type="term" value="C:plasma membrane"/>
    <property type="evidence" value="ECO:0000314"/>
    <property type="project" value="MGI"/>
</dbReference>
<dbReference type="GO" id="GO:0045211">
    <property type="term" value="C:postsynaptic membrane"/>
    <property type="evidence" value="ECO:0000314"/>
    <property type="project" value="SynGO"/>
</dbReference>
<dbReference type="GO" id="GO:0042734">
    <property type="term" value="C:presynaptic membrane"/>
    <property type="evidence" value="ECO:0000314"/>
    <property type="project" value="SynGO"/>
</dbReference>
<dbReference type="GO" id="GO:0008068">
    <property type="term" value="F:extracellularly glutamate-gated chloride channel activity"/>
    <property type="evidence" value="ECO:0000314"/>
    <property type="project" value="UniProtKB"/>
</dbReference>
<dbReference type="GO" id="GO:0015501">
    <property type="term" value="F:glutamate:sodium symporter activity"/>
    <property type="evidence" value="ECO:0000314"/>
    <property type="project" value="UniProtKB"/>
</dbReference>
<dbReference type="GO" id="GO:0005313">
    <property type="term" value="F:L-glutamate transmembrane transporter activity"/>
    <property type="evidence" value="ECO:0000314"/>
    <property type="project" value="MGI"/>
</dbReference>
<dbReference type="GO" id="GO:0008509">
    <property type="term" value="F:monoatomic anion transmembrane transporter activity"/>
    <property type="evidence" value="ECO:0000314"/>
    <property type="project" value="MGI"/>
</dbReference>
<dbReference type="GO" id="GO:1902476">
    <property type="term" value="P:chloride transmembrane transport"/>
    <property type="evidence" value="ECO:0000314"/>
    <property type="project" value="UniProtKB"/>
</dbReference>
<dbReference type="GO" id="GO:0015813">
    <property type="term" value="P:L-glutamate transmembrane transport"/>
    <property type="evidence" value="ECO:0000314"/>
    <property type="project" value="UniProtKB"/>
</dbReference>
<dbReference type="GO" id="GO:0098656">
    <property type="term" value="P:monoatomic anion transmembrane transport"/>
    <property type="evidence" value="ECO:0000314"/>
    <property type="project" value="MGI"/>
</dbReference>
<dbReference type="FunFam" id="1.10.3860.10:FF:000002">
    <property type="entry name" value="Amino acid transporter"/>
    <property type="match status" value="1"/>
</dbReference>
<dbReference type="Gene3D" id="1.10.3860.10">
    <property type="entry name" value="Sodium:dicarboxylate symporter"/>
    <property type="match status" value="1"/>
</dbReference>
<dbReference type="InterPro" id="IPR050746">
    <property type="entry name" value="DAACS"/>
</dbReference>
<dbReference type="InterPro" id="IPR001991">
    <property type="entry name" value="Na-dicarboxylate_symporter"/>
</dbReference>
<dbReference type="InterPro" id="IPR018107">
    <property type="entry name" value="Na-dicarboxylate_symporter_CS"/>
</dbReference>
<dbReference type="InterPro" id="IPR036458">
    <property type="entry name" value="Na:dicarbo_symporter_sf"/>
</dbReference>
<dbReference type="PANTHER" id="PTHR11958:SF22">
    <property type="entry name" value="EXCITATORY AMINO ACID TRANSPORTER 5"/>
    <property type="match status" value="1"/>
</dbReference>
<dbReference type="PANTHER" id="PTHR11958">
    <property type="entry name" value="SODIUM/DICARBOXYLATE SYMPORTER-RELATED"/>
    <property type="match status" value="1"/>
</dbReference>
<dbReference type="Pfam" id="PF00375">
    <property type="entry name" value="SDF"/>
    <property type="match status" value="1"/>
</dbReference>
<dbReference type="PRINTS" id="PR00173">
    <property type="entry name" value="EDTRNSPORT"/>
</dbReference>
<dbReference type="SUPFAM" id="SSF118215">
    <property type="entry name" value="Proton glutamate symport protein"/>
    <property type="match status" value="1"/>
</dbReference>
<dbReference type="PROSITE" id="PS00713">
    <property type="entry name" value="NA_DICARBOXYL_SYMP_1"/>
    <property type="match status" value="1"/>
</dbReference>
<dbReference type="PROSITE" id="PS00714">
    <property type="entry name" value="NA_DICARBOXYL_SYMP_2"/>
    <property type="match status" value="1"/>
</dbReference>
<reference key="1">
    <citation type="journal article" date="2005" name="Science">
        <title>The transcriptional landscape of the mammalian genome.</title>
        <authorList>
            <person name="Carninci P."/>
            <person name="Kasukawa T."/>
            <person name="Katayama S."/>
            <person name="Gough J."/>
            <person name="Frith M.C."/>
            <person name="Maeda N."/>
            <person name="Oyama R."/>
            <person name="Ravasi T."/>
            <person name="Lenhard B."/>
            <person name="Wells C."/>
            <person name="Kodzius R."/>
            <person name="Shimokawa K."/>
            <person name="Bajic V.B."/>
            <person name="Brenner S.E."/>
            <person name="Batalov S."/>
            <person name="Forrest A.R."/>
            <person name="Zavolan M."/>
            <person name="Davis M.J."/>
            <person name="Wilming L.G."/>
            <person name="Aidinis V."/>
            <person name="Allen J.E."/>
            <person name="Ambesi-Impiombato A."/>
            <person name="Apweiler R."/>
            <person name="Aturaliya R.N."/>
            <person name="Bailey T.L."/>
            <person name="Bansal M."/>
            <person name="Baxter L."/>
            <person name="Beisel K.W."/>
            <person name="Bersano T."/>
            <person name="Bono H."/>
            <person name="Chalk A.M."/>
            <person name="Chiu K.P."/>
            <person name="Choudhary V."/>
            <person name="Christoffels A."/>
            <person name="Clutterbuck D.R."/>
            <person name="Crowe M.L."/>
            <person name="Dalla E."/>
            <person name="Dalrymple B.P."/>
            <person name="de Bono B."/>
            <person name="Della Gatta G."/>
            <person name="di Bernardo D."/>
            <person name="Down T."/>
            <person name="Engstrom P."/>
            <person name="Fagiolini M."/>
            <person name="Faulkner G."/>
            <person name="Fletcher C.F."/>
            <person name="Fukushima T."/>
            <person name="Furuno M."/>
            <person name="Futaki S."/>
            <person name="Gariboldi M."/>
            <person name="Georgii-Hemming P."/>
            <person name="Gingeras T.R."/>
            <person name="Gojobori T."/>
            <person name="Green R.E."/>
            <person name="Gustincich S."/>
            <person name="Harbers M."/>
            <person name="Hayashi Y."/>
            <person name="Hensch T.K."/>
            <person name="Hirokawa N."/>
            <person name="Hill D."/>
            <person name="Huminiecki L."/>
            <person name="Iacono M."/>
            <person name="Ikeo K."/>
            <person name="Iwama A."/>
            <person name="Ishikawa T."/>
            <person name="Jakt M."/>
            <person name="Kanapin A."/>
            <person name="Katoh M."/>
            <person name="Kawasawa Y."/>
            <person name="Kelso J."/>
            <person name="Kitamura H."/>
            <person name="Kitano H."/>
            <person name="Kollias G."/>
            <person name="Krishnan S.P."/>
            <person name="Kruger A."/>
            <person name="Kummerfeld S.K."/>
            <person name="Kurochkin I.V."/>
            <person name="Lareau L.F."/>
            <person name="Lazarevic D."/>
            <person name="Lipovich L."/>
            <person name="Liu J."/>
            <person name="Liuni S."/>
            <person name="McWilliam S."/>
            <person name="Madan Babu M."/>
            <person name="Madera M."/>
            <person name="Marchionni L."/>
            <person name="Matsuda H."/>
            <person name="Matsuzawa S."/>
            <person name="Miki H."/>
            <person name="Mignone F."/>
            <person name="Miyake S."/>
            <person name="Morris K."/>
            <person name="Mottagui-Tabar S."/>
            <person name="Mulder N."/>
            <person name="Nakano N."/>
            <person name="Nakauchi H."/>
            <person name="Ng P."/>
            <person name="Nilsson R."/>
            <person name="Nishiguchi S."/>
            <person name="Nishikawa S."/>
            <person name="Nori F."/>
            <person name="Ohara O."/>
            <person name="Okazaki Y."/>
            <person name="Orlando V."/>
            <person name="Pang K.C."/>
            <person name="Pavan W.J."/>
            <person name="Pavesi G."/>
            <person name="Pesole G."/>
            <person name="Petrovsky N."/>
            <person name="Piazza S."/>
            <person name="Reed J."/>
            <person name="Reid J.F."/>
            <person name="Ring B.Z."/>
            <person name="Ringwald M."/>
            <person name="Rost B."/>
            <person name="Ruan Y."/>
            <person name="Salzberg S.L."/>
            <person name="Sandelin A."/>
            <person name="Schneider C."/>
            <person name="Schoenbach C."/>
            <person name="Sekiguchi K."/>
            <person name="Semple C.A."/>
            <person name="Seno S."/>
            <person name="Sessa L."/>
            <person name="Sheng Y."/>
            <person name="Shibata Y."/>
            <person name="Shimada H."/>
            <person name="Shimada K."/>
            <person name="Silva D."/>
            <person name="Sinclair B."/>
            <person name="Sperling S."/>
            <person name="Stupka E."/>
            <person name="Sugiura K."/>
            <person name="Sultana R."/>
            <person name="Takenaka Y."/>
            <person name="Taki K."/>
            <person name="Tammoja K."/>
            <person name="Tan S.L."/>
            <person name="Tang S."/>
            <person name="Taylor M.S."/>
            <person name="Tegner J."/>
            <person name="Teichmann S.A."/>
            <person name="Ueda H.R."/>
            <person name="van Nimwegen E."/>
            <person name="Verardo R."/>
            <person name="Wei C.L."/>
            <person name="Yagi K."/>
            <person name="Yamanishi H."/>
            <person name="Zabarovsky E."/>
            <person name="Zhu S."/>
            <person name="Zimmer A."/>
            <person name="Hide W."/>
            <person name="Bult C."/>
            <person name="Grimmond S.M."/>
            <person name="Teasdale R.D."/>
            <person name="Liu E.T."/>
            <person name="Brusic V."/>
            <person name="Quackenbush J."/>
            <person name="Wahlestedt C."/>
            <person name="Mattick J.S."/>
            <person name="Hume D.A."/>
            <person name="Kai C."/>
            <person name="Sasaki D."/>
            <person name="Tomaru Y."/>
            <person name="Fukuda S."/>
            <person name="Kanamori-Katayama M."/>
            <person name="Suzuki M."/>
            <person name="Aoki J."/>
            <person name="Arakawa T."/>
            <person name="Iida J."/>
            <person name="Imamura K."/>
            <person name="Itoh M."/>
            <person name="Kato T."/>
            <person name="Kawaji H."/>
            <person name="Kawagashira N."/>
            <person name="Kawashima T."/>
            <person name="Kojima M."/>
            <person name="Kondo S."/>
            <person name="Konno H."/>
            <person name="Nakano K."/>
            <person name="Ninomiya N."/>
            <person name="Nishio T."/>
            <person name="Okada M."/>
            <person name="Plessy C."/>
            <person name="Shibata K."/>
            <person name="Shiraki T."/>
            <person name="Suzuki S."/>
            <person name="Tagami M."/>
            <person name="Waki K."/>
            <person name="Watahiki A."/>
            <person name="Okamura-Oho Y."/>
            <person name="Suzuki H."/>
            <person name="Kawai J."/>
            <person name="Hayashizaki Y."/>
        </authorList>
    </citation>
    <scope>NUCLEOTIDE SEQUENCE [LARGE SCALE MRNA]</scope>
    <source>
        <strain>C57BL/6J</strain>
        <tissue>Retina</tissue>
    </source>
</reference>
<reference key="2">
    <citation type="journal article" date="2009" name="PLoS Biol.">
        <title>Lineage-specific biology revealed by a finished genome assembly of the mouse.</title>
        <authorList>
            <person name="Church D.M."/>
            <person name="Goodstadt L."/>
            <person name="Hillier L.W."/>
            <person name="Zody M.C."/>
            <person name="Goldstein S."/>
            <person name="She X."/>
            <person name="Bult C.J."/>
            <person name="Agarwala R."/>
            <person name="Cherry J.L."/>
            <person name="DiCuccio M."/>
            <person name="Hlavina W."/>
            <person name="Kapustin Y."/>
            <person name="Meric P."/>
            <person name="Maglott D."/>
            <person name="Birtle Z."/>
            <person name="Marques A.C."/>
            <person name="Graves T."/>
            <person name="Zhou S."/>
            <person name="Teague B."/>
            <person name="Potamousis K."/>
            <person name="Churas C."/>
            <person name="Place M."/>
            <person name="Herschleb J."/>
            <person name="Runnheim R."/>
            <person name="Forrest D."/>
            <person name="Amos-Landgraf J."/>
            <person name="Schwartz D.C."/>
            <person name="Cheng Z."/>
            <person name="Lindblad-Toh K."/>
            <person name="Eichler E.E."/>
            <person name="Ponting C.P."/>
        </authorList>
    </citation>
    <scope>NUCLEOTIDE SEQUENCE [LARGE SCALE GENOMIC DNA]</scope>
    <source>
        <strain>C57BL/6J</strain>
    </source>
</reference>
<reference key="3">
    <citation type="journal article" date="2004" name="Genome Res.">
        <title>The status, quality, and expansion of the NIH full-length cDNA project: the Mammalian Gene Collection (MGC).</title>
        <authorList>
            <consortium name="The MGC Project Team"/>
        </authorList>
    </citation>
    <scope>NUCLEOTIDE SEQUENCE [LARGE SCALE MRNA]</scope>
    <source>
        <tissue>Eye</tissue>
    </source>
</reference>
<reference key="4">
    <citation type="journal article" date="2006" name="J. Physiol. (Lond.)">
        <title>The glutamate transporter EAAT5 works as a presynaptic receptor in mouse rod bipolar cells.</title>
        <authorList>
            <person name="Wersinger E."/>
            <person name="Schwab Y."/>
            <person name="Sahel J.A."/>
            <person name="Rendon A."/>
            <person name="Pow D.V."/>
            <person name="Picaud S."/>
            <person name="Roux M.J."/>
        </authorList>
    </citation>
    <scope>TISSUE SPECIFICITY</scope>
    <scope>SUBCELLULAR LOCATION</scope>
    <scope>FUNCTION</scope>
    <scope>TRANSPORTER ACTIVITY</scope>
</reference>
<reference key="5">
    <citation type="journal article" date="2020" name="J. Neurophysiol.">
        <title>Light-evoked glutamate transporter EAAT5 activation coordinates with conventional feedback inhibition to control rod bipolar cell output.</title>
        <authorList>
            <person name="Bligard G.W."/>
            <person name="DeBrecht J."/>
            <person name="Smith R.G."/>
            <person name="Lukasiewicz P.D."/>
        </authorList>
    </citation>
    <scope>FUNCTION</scope>
    <scope>TRANSPORTER ACTIVITY</scope>
    <scope>TISSUE SPECIFICITY</scope>
</reference>
<feature type="chain" id="PRO_0000284451" description="Excitatory amino acid transporter 5">
    <location>
        <begin position="1"/>
        <end position="559"/>
    </location>
</feature>
<feature type="topological domain" description="Cytoplasmic" evidence="2">
    <location>
        <begin position="1"/>
        <end position="16"/>
    </location>
</feature>
<feature type="transmembrane region" description="Helical" evidence="2">
    <location>
        <begin position="17"/>
        <end position="37"/>
    </location>
</feature>
<feature type="transmembrane region" description="Helical" evidence="2">
    <location>
        <begin position="60"/>
        <end position="80"/>
    </location>
</feature>
<feature type="transmembrane region" description="Helical" evidence="2">
    <location>
        <begin position="94"/>
        <end position="114"/>
    </location>
</feature>
<feature type="topological domain" description="Extracellular" evidence="2">
    <location>
        <begin position="115"/>
        <end position="215"/>
    </location>
</feature>
<feature type="transmembrane region" description="Helical" evidence="2">
    <location>
        <begin position="216"/>
        <end position="236"/>
    </location>
</feature>
<feature type="transmembrane region" description="Helical" evidence="2">
    <location>
        <begin position="259"/>
        <end position="279"/>
    </location>
</feature>
<feature type="transmembrane region" description="Helical" evidence="2">
    <location>
        <begin position="298"/>
        <end position="318"/>
    </location>
</feature>
<feature type="transmembrane region" description="Helical" evidence="2">
    <location>
        <begin position="329"/>
        <end position="349"/>
    </location>
</feature>
<feature type="transmembrane region" description="Helical" evidence="2">
    <location>
        <begin position="371"/>
        <end position="391"/>
    </location>
</feature>
<feature type="transmembrane region" description="Helical" evidence="2">
    <location>
        <begin position="413"/>
        <end position="433"/>
    </location>
</feature>
<feature type="transmembrane region" description="Helical" evidence="2">
    <location>
        <begin position="456"/>
        <end position="476"/>
    </location>
</feature>
<feature type="glycosylation site" description="N-linked (GlcNAc...) asparagine" evidence="2">
    <location>
        <position position="190"/>
    </location>
</feature>
<feature type="glycosylation site" description="N-linked (GlcNAc...) asparagine" evidence="2">
    <location>
        <position position="253"/>
    </location>
</feature>
<protein>
    <recommendedName>
        <fullName evidence="5">Excitatory amino acid transporter 5</fullName>
    </recommendedName>
    <alternativeName>
        <fullName>Solute carrier family 1 member 7</fullName>
    </alternativeName>
</protein>
<name>EAA5_MOUSE</name>
<proteinExistence type="evidence at transcript level"/>
<keyword id="KW-1003">Cell membrane</keyword>
<keyword id="KW-0325">Glycoprotein</keyword>
<keyword id="KW-0472">Membrane</keyword>
<keyword id="KW-1185">Reference proteome</keyword>
<keyword id="KW-0769">Symport</keyword>
<keyword id="KW-0770">Synapse</keyword>
<keyword id="KW-0812">Transmembrane</keyword>
<keyword id="KW-1133">Transmembrane helix</keyword>
<keyword id="KW-0813">Transport</keyword>
<sequence length="559" mass="60106">MVLDAVLARGRTVCKHNGLLILSVLSVIVGCLLGFFLRTQRLSPQEISYFQFPGELLMRMLKMLILPLVVSSLMSGLASLDAKTSSRLGILTVAYYLWTTFLAVVVGIIMVSIIHPGGAAQKETTEQSGKPVMSSADALLDLVRNMFPANLVEATFKQYRTKTTPVIKSPRGAAEEAPRRIVIYGVQEDNGSRVQNFALDLTPPPEIVYKSEPGTSDGMNVLGIVIFSATMGIMLGRMGDSGTPLVSFCQCLNESVMKIVAVAGWYFPFGIVFLIAGKILEMDDPKAVGKKLGFYAVTVVCGLVVHGLLILPLLYFLITKKNPIVFIRGVLQALLIALATSSSSATLPITFKCLLENNHIDRRIARFVLPVGATINMDGTALYEAVAAIFIAQVNNYELDFGQIITISITATAASIGAAGIPQAGLVTMVIVLTSVGLPTDDINLIIAVDWALDRFRTMINVLGDALAAGIMAHICRKDFAQDMGTEKLLPCETKPVTLQEIVAAQQNGCVKSVAEASELTLGPTCPHHIPVQVEQDEDPAAASLDHCTIEISELETNV</sequence>